<accession>Q8NCF0</accession>
<accession>Q8IUW8</accession>
<protein>
    <recommendedName>
        <fullName>C-type lectin domain family 18 member C</fullName>
    </recommendedName>
    <alternativeName>
        <fullName>Mannose receptor-like protein 3</fullName>
    </alternativeName>
</protein>
<proteinExistence type="evidence at transcript level"/>
<sequence length="446" mass="49585">MLHPETSPGRGHLLAVLLALLGTAWAEVWPPQLQEQAPMAGALNRKESFLLLSLHNRLRSWVQPPAADMRRLDWSDSLAQLAQARAALCGIPTPSLASGLWRTLQVGWNMQLLPAGLASFVEVVSLWFAEGQRYSHAAGECARNATCTHYTQLVWATSSQLGCGRHLCSAGQAAIEAFVCAYSPRGNWEVNGKTIVPYKKGAWCSLCTASVSGCFKAWDHAGGLCEVPRNPCRMSCQNHGRLNISTCHCHCPPGYTGRYCQVRCSLQCVHGRFREEECSCVCDIGYGGAQCATKVHFPFHTCDLRIDGDCFMVSSEADTYYRARMKCQRKGGVLAQIKSQKVQDILAFYLGRLETTNEVIDSDFETRNFWIGLTYKTAKDSFRWATGEHQAFTSFAFGQPDNHGFGNCVELQASAAFNWNNQRCKTRNRYICQFAQEHISRWGPGS</sequence>
<reference key="1">
    <citation type="journal article" date="2004" name="Nat. Genet.">
        <title>Complete sequencing and characterization of 21,243 full-length human cDNAs.</title>
        <authorList>
            <person name="Ota T."/>
            <person name="Suzuki Y."/>
            <person name="Nishikawa T."/>
            <person name="Otsuki T."/>
            <person name="Sugiyama T."/>
            <person name="Irie R."/>
            <person name="Wakamatsu A."/>
            <person name="Hayashi K."/>
            <person name="Sato H."/>
            <person name="Nagai K."/>
            <person name="Kimura K."/>
            <person name="Makita H."/>
            <person name="Sekine M."/>
            <person name="Obayashi M."/>
            <person name="Nishi T."/>
            <person name="Shibahara T."/>
            <person name="Tanaka T."/>
            <person name="Ishii S."/>
            <person name="Yamamoto J."/>
            <person name="Saito K."/>
            <person name="Kawai Y."/>
            <person name="Isono Y."/>
            <person name="Nakamura Y."/>
            <person name="Nagahari K."/>
            <person name="Murakami K."/>
            <person name="Yasuda T."/>
            <person name="Iwayanagi T."/>
            <person name="Wagatsuma M."/>
            <person name="Shiratori A."/>
            <person name="Sudo H."/>
            <person name="Hosoiri T."/>
            <person name="Kaku Y."/>
            <person name="Kodaira H."/>
            <person name="Kondo H."/>
            <person name="Sugawara M."/>
            <person name="Takahashi M."/>
            <person name="Kanda K."/>
            <person name="Yokoi T."/>
            <person name="Furuya T."/>
            <person name="Kikkawa E."/>
            <person name="Omura Y."/>
            <person name="Abe K."/>
            <person name="Kamihara K."/>
            <person name="Katsuta N."/>
            <person name="Sato K."/>
            <person name="Tanikawa M."/>
            <person name="Yamazaki M."/>
            <person name="Ninomiya K."/>
            <person name="Ishibashi T."/>
            <person name="Yamashita H."/>
            <person name="Murakawa K."/>
            <person name="Fujimori K."/>
            <person name="Tanai H."/>
            <person name="Kimata M."/>
            <person name="Watanabe M."/>
            <person name="Hiraoka S."/>
            <person name="Chiba Y."/>
            <person name="Ishida S."/>
            <person name="Ono Y."/>
            <person name="Takiguchi S."/>
            <person name="Watanabe S."/>
            <person name="Yosida M."/>
            <person name="Hotuta T."/>
            <person name="Kusano J."/>
            <person name="Kanehori K."/>
            <person name="Takahashi-Fujii A."/>
            <person name="Hara H."/>
            <person name="Tanase T.-O."/>
            <person name="Nomura Y."/>
            <person name="Togiya S."/>
            <person name="Komai F."/>
            <person name="Hara R."/>
            <person name="Takeuchi K."/>
            <person name="Arita M."/>
            <person name="Imose N."/>
            <person name="Musashino K."/>
            <person name="Yuuki H."/>
            <person name="Oshima A."/>
            <person name="Sasaki N."/>
            <person name="Aotsuka S."/>
            <person name="Yoshikawa Y."/>
            <person name="Matsunawa H."/>
            <person name="Ichihara T."/>
            <person name="Shiohata N."/>
            <person name="Sano S."/>
            <person name="Moriya S."/>
            <person name="Momiyama H."/>
            <person name="Satoh N."/>
            <person name="Takami S."/>
            <person name="Terashima Y."/>
            <person name="Suzuki O."/>
            <person name="Nakagawa S."/>
            <person name="Senoh A."/>
            <person name="Mizoguchi H."/>
            <person name="Goto Y."/>
            <person name="Shimizu F."/>
            <person name="Wakebe H."/>
            <person name="Hishigaki H."/>
            <person name="Watanabe T."/>
            <person name="Sugiyama A."/>
            <person name="Takemoto M."/>
            <person name="Kawakami B."/>
            <person name="Yamazaki M."/>
            <person name="Watanabe K."/>
            <person name="Kumagai A."/>
            <person name="Itakura S."/>
            <person name="Fukuzumi Y."/>
            <person name="Fujimori Y."/>
            <person name="Komiyama M."/>
            <person name="Tashiro H."/>
            <person name="Tanigami A."/>
            <person name="Fujiwara T."/>
            <person name="Ono T."/>
            <person name="Yamada K."/>
            <person name="Fujii Y."/>
            <person name="Ozaki K."/>
            <person name="Hirao M."/>
            <person name="Ohmori Y."/>
            <person name="Kawabata A."/>
            <person name="Hikiji T."/>
            <person name="Kobatake N."/>
            <person name="Inagaki H."/>
            <person name="Ikema Y."/>
            <person name="Okamoto S."/>
            <person name="Okitani R."/>
            <person name="Kawakami T."/>
            <person name="Noguchi S."/>
            <person name="Itoh T."/>
            <person name="Shigeta K."/>
            <person name="Senba T."/>
            <person name="Matsumura K."/>
            <person name="Nakajima Y."/>
            <person name="Mizuno T."/>
            <person name="Morinaga M."/>
            <person name="Sasaki M."/>
            <person name="Togashi T."/>
            <person name="Oyama M."/>
            <person name="Hata H."/>
            <person name="Watanabe M."/>
            <person name="Komatsu T."/>
            <person name="Mizushima-Sugano J."/>
            <person name="Satoh T."/>
            <person name="Shirai Y."/>
            <person name="Takahashi Y."/>
            <person name="Nakagawa K."/>
            <person name="Okumura K."/>
            <person name="Nagase T."/>
            <person name="Nomura N."/>
            <person name="Kikuchi H."/>
            <person name="Masuho Y."/>
            <person name="Yamashita R."/>
            <person name="Nakai K."/>
            <person name="Yada T."/>
            <person name="Nakamura Y."/>
            <person name="Ohara O."/>
            <person name="Isogai T."/>
            <person name="Sugano S."/>
        </authorList>
    </citation>
    <scope>NUCLEOTIDE SEQUENCE [LARGE SCALE MRNA] (ISOFORM 1)</scope>
</reference>
<reference key="2">
    <citation type="journal article" date="2004" name="Genome Res.">
        <title>The status, quality, and expansion of the NIH full-length cDNA project: the Mammalian Gene Collection (MGC).</title>
        <authorList>
            <consortium name="The MGC Project Team"/>
        </authorList>
    </citation>
    <scope>NUCLEOTIDE SEQUENCE [LARGE SCALE MRNA] (ISOFORM 2)</scope>
    <source>
        <tissue>Colon</tissue>
    </source>
</reference>
<reference key="3">
    <citation type="journal article" date="2015" name="J. Biol. Chem.">
        <title>Human CLEC18 gene cluster contains C-type lectins with differential glycan-binding specificity.</title>
        <authorList>
            <person name="Huang Y.L."/>
            <person name="Pai F.S."/>
            <person name="Tsou Y.T."/>
            <person name="Mon H.C."/>
            <person name="Hsu T.L."/>
            <person name="Wu C.Y."/>
            <person name="Chou T.Y."/>
            <person name="Yang W.B."/>
            <person name="Chen C.H."/>
            <person name="Wong C.H."/>
            <person name="Hsieh S.L."/>
        </authorList>
    </citation>
    <scope>SUBCELLULAR LOCATION</scope>
    <scope>TISSUE SPECIFICITY</scope>
    <scope>FUNCTION</scope>
</reference>
<name>CL18C_HUMAN</name>
<gene>
    <name type="primary">CLEC18C</name>
    <name type="synonym">MRLP3</name>
</gene>
<evidence type="ECO:0000250" key="1"/>
<evidence type="ECO:0000250" key="2">
    <source>
        <dbReference type="UniProtKB" id="A5D8T8"/>
    </source>
</evidence>
<evidence type="ECO:0000255" key="3"/>
<evidence type="ECO:0000255" key="4">
    <source>
        <dbReference type="PROSITE-ProRule" id="PRU00040"/>
    </source>
</evidence>
<evidence type="ECO:0000255" key="5">
    <source>
        <dbReference type="PROSITE-ProRule" id="PRU00076"/>
    </source>
</evidence>
<evidence type="ECO:0000269" key="6">
    <source>
    </source>
</evidence>
<evidence type="ECO:0000303" key="7">
    <source>
    </source>
</evidence>
<evidence type="ECO:0000305" key="8"/>
<evidence type="ECO:0000305" key="9">
    <source>
    </source>
</evidence>
<dbReference type="EMBL" id="AK074773">
    <property type="protein sequence ID" value="BAC11199.1"/>
    <property type="molecule type" value="mRNA"/>
</dbReference>
<dbReference type="EMBL" id="BC039068">
    <property type="protein sequence ID" value="AAH39068.1"/>
    <property type="status" value="ALT_INIT"/>
    <property type="molecule type" value="mRNA"/>
</dbReference>
<dbReference type="CCDS" id="CCDS32473.1">
    <molecule id="Q8NCF0-1"/>
</dbReference>
<dbReference type="RefSeq" id="NP_775890.2">
    <molecule id="Q8NCF0-1"/>
    <property type="nucleotide sequence ID" value="NM_173619.4"/>
</dbReference>
<dbReference type="SMR" id="Q8NCF0"/>
<dbReference type="BioGRID" id="129716">
    <property type="interactions" value="1"/>
</dbReference>
<dbReference type="FunCoup" id="Q8NCF0">
    <property type="interactions" value="9"/>
</dbReference>
<dbReference type="IntAct" id="Q8NCF0">
    <property type="interactions" value="1"/>
</dbReference>
<dbReference type="STRING" id="9606.ENSP00000477846"/>
<dbReference type="GlyCosmos" id="Q8NCF0">
    <property type="glycosylation" value="1 site, No reported glycans"/>
</dbReference>
<dbReference type="GlyGen" id="Q8NCF0">
    <property type="glycosylation" value="1 site"/>
</dbReference>
<dbReference type="iPTMnet" id="Q8NCF0"/>
<dbReference type="PhosphoSitePlus" id="Q8NCF0"/>
<dbReference type="BioMuta" id="CLEC18C"/>
<dbReference type="DMDM" id="172045775"/>
<dbReference type="MassIVE" id="Q8NCF0"/>
<dbReference type="PaxDb" id="9606-ENSP00000477846"/>
<dbReference type="PeptideAtlas" id="Q8NCF0"/>
<dbReference type="ProteomicsDB" id="72885">
    <molecule id="Q8NCF0-1"/>
</dbReference>
<dbReference type="Antibodypedia" id="66794">
    <property type="antibodies" value="66 antibodies from 14 providers"/>
</dbReference>
<dbReference type="DNASU" id="283971"/>
<dbReference type="Ensembl" id="ENST00000314151.12">
    <molecule id="Q8NCF0-1"/>
    <property type="protein sequence ID" value="ENSP00000326538.8"/>
    <property type="gene ID" value="ENSG00000157335.21"/>
</dbReference>
<dbReference type="Ensembl" id="ENST00000541793.7">
    <molecule id="Q8NCF0-1"/>
    <property type="protein sequence ID" value="ENSP00000444875.2"/>
    <property type="gene ID" value="ENSG00000157335.21"/>
</dbReference>
<dbReference type="Ensembl" id="ENST00000569347.6">
    <molecule id="Q8NCF0-1"/>
    <property type="protein sequence ID" value="ENSP00000455920.2"/>
    <property type="gene ID" value="ENSG00000157335.21"/>
</dbReference>
<dbReference type="Ensembl" id="ENST00000618957.4">
    <molecule id="Q8NCF0-1"/>
    <property type="protein sequence ID" value="ENSP00000477846.1"/>
    <property type="gene ID" value="ENSG00000157335.21"/>
</dbReference>
<dbReference type="GeneID" id="283971"/>
<dbReference type="KEGG" id="hsa:283971"/>
<dbReference type="MANE-Select" id="ENST00000541793.7">
    <property type="protein sequence ID" value="ENSP00000444875.2"/>
    <property type="RefSeq nucleotide sequence ID" value="NM_173619.4"/>
    <property type="RefSeq protein sequence ID" value="NP_775890.2"/>
</dbReference>
<dbReference type="UCSC" id="uc002eyk.3">
    <molecule id="Q8NCF0-1"/>
    <property type="organism name" value="human"/>
</dbReference>
<dbReference type="AGR" id="HGNC:28538"/>
<dbReference type="CTD" id="283971"/>
<dbReference type="DisGeNET" id="283971"/>
<dbReference type="GeneCards" id="CLEC18C"/>
<dbReference type="HGNC" id="HGNC:28538">
    <property type="gene designation" value="CLEC18C"/>
</dbReference>
<dbReference type="HPA" id="ENSG00000157335">
    <property type="expression patterns" value="Tissue enriched (kidney)"/>
</dbReference>
<dbReference type="MIM" id="616573">
    <property type="type" value="gene"/>
</dbReference>
<dbReference type="neXtProt" id="NX_Q8NCF0"/>
<dbReference type="PharmGKB" id="PA164718038"/>
<dbReference type="VEuPathDB" id="HostDB:ENSG00000157335"/>
<dbReference type="eggNOG" id="KOG3017">
    <property type="taxonomic scope" value="Eukaryota"/>
</dbReference>
<dbReference type="eggNOG" id="KOG4297">
    <property type="taxonomic scope" value="Eukaryota"/>
</dbReference>
<dbReference type="GeneTree" id="ENSGT00900000141128"/>
<dbReference type="InParanoid" id="Q8NCF0"/>
<dbReference type="OMA" id="ICVQNAQ"/>
<dbReference type="OrthoDB" id="337038at2759"/>
<dbReference type="PAN-GO" id="Q8NCF0">
    <property type="GO annotations" value="2 GO annotations based on evolutionary models"/>
</dbReference>
<dbReference type="PhylomeDB" id="Q8NCF0"/>
<dbReference type="TreeFam" id="TF350472"/>
<dbReference type="PathwayCommons" id="Q8NCF0"/>
<dbReference type="SignaLink" id="Q8NCF0"/>
<dbReference type="BioGRID-ORCS" id="283971">
    <property type="hits" value="73 hits in 1030 CRISPR screens"/>
</dbReference>
<dbReference type="GenomeRNAi" id="283971"/>
<dbReference type="Pharos" id="Q8NCF0">
    <property type="development level" value="Tbio"/>
</dbReference>
<dbReference type="PRO" id="PR:Q8NCF0"/>
<dbReference type="Proteomes" id="UP000005640">
    <property type="component" value="Chromosome 16"/>
</dbReference>
<dbReference type="RNAct" id="Q8NCF0">
    <property type="molecule type" value="protein"/>
</dbReference>
<dbReference type="Bgee" id="ENSG00000157335">
    <property type="expression patterns" value="Expressed in adult mammalian kidney and 89 other cell types or tissues"/>
</dbReference>
<dbReference type="ExpressionAtlas" id="Q8NCF0">
    <property type="expression patterns" value="baseline and differential"/>
</dbReference>
<dbReference type="GO" id="GO:0005783">
    <property type="term" value="C:endoplasmic reticulum"/>
    <property type="evidence" value="ECO:0000304"/>
    <property type="project" value="UniProtKB"/>
</dbReference>
<dbReference type="GO" id="GO:0005768">
    <property type="term" value="C:endosome"/>
    <property type="evidence" value="ECO:0000304"/>
    <property type="project" value="UniProtKB"/>
</dbReference>
<dbReference type="GO" id="GO:0005615">
    <property type="term" value="C:extracellular space"/>
    <property type="evidence" value="ECO:0000318"/>
    <property type="project" value="GO_Central"/>
</dbReference>
<dbReference type="GO" id="GO:0005794">
    <property type="term" value="C:Golgi apparatus"/>
    <property type="evidence" value="ECO:0000304"/>
    <property type="project" value="UniProtKB"/>
</dbReference>
<dbReference type="GO" id="GO:0030247">
    <property type="term" value="F:polysaccharide binding"/>
    <property type="evidence" value="ECO:0000314"/>
    <property type="project" value="UniProtKB"/>
</dbReference>
<dbReference type="CDD" id="cd05380">
    <property type="entry name" value="CAP_euk"/>
    <property type="match status" value="1"/>
</dbReference>
<dbReference type="CDD" id="cd00037">
    <property type="entry name" value="CLECT"/>
    <property type="match status" value="1"/>
</dbReference>
<dbReference type="CDD" id="cd00054">
    <property type="entry name" value="EGF_CA"/>
    <property type="match status" value="1"/>
</dbReference>
<dbReference type="FunFam" id="3.40.33.10:FF:000014">
    <property type="entry name" value="C-type lectin domain family 18 member A"/>
    <property type="match status" value="1"/>
</dbReference>
<dbReference type="FunFam" id="3.10.100.10:FF:000037">
    <property type="entry name" value="C-type lectin domain family 18 member A-like"/>
    <property type="match status" value="1"/>
</dbReference>
<dbReference type="Gene3D" id="3.40.33.10">
    <property type="entry name" value="CAP"/>
    <property type="match status" value="1"/>
</dbReference>
<dbReference type="Gene3D" id="2.10.25.10">
    <property type="entry name" value="Laminin"/>
    <property type="match status" value="1"/>
</dbReference>
<dbReference type="Gene3D" id="3.10.100.10">
    <property type="entry name" value="Mannose-Binding Protein A, subunit A"/>
    <property type="match status" value="1"/>
</dbReference>
<dbReference type="InterPro" id="IPR001304">
    <property type="entry name" value="C-type_lectin-like"/>
</dbReference>
<dbReference type="InterPro" id="IPR016186">
    <property type="entry name" value="C-type_lectin-like/link_sf"/>
</dbReference>
<dbReference type="InterPro" id="IPR018378">
    <property type="entry name" value="C-type_lectin_CS"/>
</dbReference>
<dbReference type="InterPro" id="IPR014044">
    <property type="entry name" value="CAP_dom"/>
</dbReference>
<dbReference type="InterPro" id="IPR035940">
    <property type="entry name" value="CAP_sf"/>
</dbReference>
<dbReference type="InterPro" id="IPR001283">
    <property type="entry name" value="CRISP-related"/>
</dbReference>
<dbReference type="InterPro" id="IPR016187">
    <property type="entry name" value="CTDL_fold"/>
</dbReference>
<dbReference type="InterPro" id="IPR000742">
    <property type="entry name" value="EGF-like_dom"/>
</dbReference>
<dbReference type="PANTHER" id="PTHR10334">
    <property type="entry name" value="CYSTEINE-RICH SECRETORY PROTEIN-RELATED"/>
    <property type="match status" value="1"/>
</dbReference>
<dbReference type="Pfam" id="PF00188">
    <property type="entry name" value="CAP"/>
    <property type="match status" value="1"/>
</dbReference>
<dbReference type="Pfam" id="PF00059">
    <property type="entry name" value="Lectin_C"/>
    <property type="match status" value="1"/>
</dbReference>
<dbReference type="PRINTS" id="PR00837">
    <property type="entry name" value="V5TPXLIKE"/>
</dbReference>
<dbReference type="SMART" id="SM00034">
    <property type="entry name" value="CLECT"/>
    <property type="match status" value="1"/>
</dbReference>
<dbReference type="SMART" id="SM00181">
    <property type="entry name" value="EGF"/>
    <property type="match status" value="2"/>
</dbReference>
<dbReference type="SMART" id="SM00198">
    <property type="entry name" value="SCP"/>
    <property type="match status" value="1"/>
</dbReference>
<dbReference type="SUPFAM" id="SSF56436">
    <property type="entry name" value="C-type lectin-like"/>
    <property type="match status" value="1"/>
</dbReference>
<dbReference type="SUPFAM" id="SSF55797">
    <property type="entry name" value="PR-1-like"/>
    <property type="match status" value="1"/>
</dbReference>
<dbReference type="PROSITE" id="PS00615">
    <property type="entry name" value="C_TYPE_LECTIN_1"/>
    <property type="match status" value="1"/>
</dbReference>
<dbReference type="PROSITE" id="PS50041">
    <property type="entry name" value="C_TYPE_LECTIN_2"/>
    <property type="match status" value="1"/>
</dbReference>
<dbReference type="PROSITE" id="PS00022">
    <property type="entry name" value="EGF_1"/>
    <property type="match status" value="2"/>
</dbReference>
<dbReference type="PROSITE" id="PS01186">
    <property type="entry name" value="EGF_2"/>
    <property type="match status" value="2"/>
</dbReference>
<dbReference type="PROSITE" id="PS50026">
    <property type="entry name" value="EGF_3"/>
    <property type="match status" value="1"/>
</dbReference>
<feature type="signal peptide" evidence="3">
    <location>
        <begin position="1"/>
        <end position="26"/>
    </location>
</feature>
<feature type="chain" id="PRO_0000324317" description="C-type lectin domain family 18 member C">
    <location>
        <begin position="27"/>
        <end position="446"/>
    </location>
</feature>
<feature type="domain" description="SCP">
    <location>
        <begin position="52"/>
        <end position="182"/>
    </location>
</feature>
<feature type="domain" description="EGF-like" evidence="5">
    <location>
        <begin position="228"/>
        <end position="261"/>
    </location>
</feature>
<feature type="domain" description="C-type lectin" evidence="4">
    <location>
        <begin position="306"/>
        <end position="433"/>
    </location>
</feature>
<feature type="glycosylation site" description="N-linked (GlcNAc...) asparagine" evidence="3">
    <location>
        <position position="144"/>
    </location>
</feature>
<feature type="disulfide bond" evidence="1">
    <location>
        <begin position="236"/>
        <end position="249"/>
    </location>
</feature>
<feature type="disulfide bond" evidence="1">
    <location>
        <begin position="251"/>
        <end position="260"/>
    </location>
</feature>
<feature type="disulfide bond" evidence="1">
    <location>
        <begin position="327"/>
        <end position="432"/>
    </location>
</feature>
<feature type="disulfide bond" evidence="1">
    <location>
        <begin position="408"/>
        <end position="424"/>
    </location>
</feature>
<feature type="splice variant" id="VSP_032206" description="In isoform 2." evidence="7">
    <original>RKGGVLAQIKS</original>
    <variation>VTVTPSFLGTP</variation>
    <location>
        <begin position="329"/>
        <end position="339"/>
    </location>
</feature>
<feature type="splice variant" id="VSP_032207" description="In isoform 2." evidence="7">
    <location>
        <begin position="340"/>
        <end position="446"/>
    </location>
</feature>
<feature type="sequence conflict" description="In Ref. 2; AAH39068." evidence="8" ref="2">
    <original>M</original>
    <variation>R</variation>
    <location>
        <position position="69"/>
    </location>
</feature>
<feature type="sequence conflict" description="In Ref. 1; BAC11199." evidence="8" ref="1">
    <original>I</original>
    <variation>T</variation>
    <location>
        <position position="91"/>
    </location>
</feature>
<feature type="sequence conflict" description="In Ref. 1; BAC11199." evidence="8" ref="1">
    <original>L</original>
    <variation>P</variation>
    <location>
        <position position="100"/>
    </location>
</feature>
<comment type="function">
    <text evidence="6">Binds polysaccharidesin a Ca(2+)-independent manner with a preferentially binding to fucoidan, beta-glucans and galactans.</text>
</comment>
<comment type="subcellular location">
    <subcellularLocation>
        <location evidence="2">Secreted</location>
    </subcellularLocation>
    <subcellularLocation>
        <location evidence="9">Endoplasmic reticulum</location>
    </subcellularLocation>
    <subcellularLocation>
        <location evidence="9">Golgi apparatus</location>
    </subcellularLocation>
    <subcellularLocation>
        <location evidence="9">Endosome</location>
    </subcellularLocation>
</comment>
<comment type="alternative products">
    <event type="alternative splicing"/>
    <isoform>
        <id>Q8NCF0-1</id>
        <name>1</name>
        <sequence type="displayed"/>
    </isoform>
    <isoform>
        <id>Q8NCF0-2</id>
        <name>2</name>
        <sequence type="described" ref="VSP_032206 VSP_032207"/>
    </isoform>
</comment>
<comment type="tissue specificity">
    <text evidence="6">Detected in peripheral blood cells.</text>
</comment>
<comment type="sequence caution" evidence="8">
    <conflict type="erroneous initiation">
        <sequence resource="EMBL-CDS" id="AAH39068"/>
    </conflict>
</comment>
<organism>
    <name type="scientific">Homo sapiens</name>
    <name type="common">Human</name>
    <dbReference type="NCBI Taxonomy" id="9606"/>
    <lineage>
        <taxon>Eukaryota</taxon>
        <taxon>Metazoa</taxon>
        <taxon>Chordata</taxon>
        <taxon>Craniata</taxon>
        <taxon>Vertebrata</taxon>
        <taxon>Euteleostomi</taxon>
        <taxon>Mammalia</taxon>
        <taxon>Eutheria</taxon>
        <taxon>Euarchontoglires</taxon>
        <taxon>Primates</taxon>
        <taxon>Haplorrhini</taxon>
        <taxon>Catarrhini</taxon>
        <taxon>Hominidae</taxon>
        <taxon>Homo</taxon>
    </lineage>
</organism>
<keyword id="KW-0025">Alternative splicing</keyword>
<keyword id="KW-1015">Disulfide bond</keyword>
<keyword id="KW-0245">EGF-like domain</keyword>
<keyword id="KW-0256">Endoplasmic reticulum</keyword>
<keyword id="KW-0967">Endosome</keyword>
<keyword id="KW-0325">Glycoprotein</keyword>
<keyword id="KW-0333">Golgi apparatus</keyword>
<keyword id="KW-0430">Lectin</keyword>
<keyword id="KW-1185">Reference proteome</keyword>
<keyword id="KW-0964">Secreted</keyword>
<keyword id="KW-0732">Signal</keyword>